<gene>
    <name evidence="1" type="primary">glgB</name>
    <name type="ordered locus">LSL_1294</name>
</gene>
<evidence type="ECO:0000255" key="1">
    <source>
        <dbReference type="HAMAP-Rule" id="MF_00685"/>
    </source>
</evidence>
<comment type="function">
    <text evidence="1">Catalyzes the formation of the alpha-1,6-glucosidic linkages in glycogen by scission of a 1,4-alpha-linked oligosaccharide from growing alpha-1,4-glucan chains and the subsequent attachment of the oligosaccharide to the alpha-1,6 position.</text>
</comment>
<comment type="catalytic activity">
    <reaction evidence="1">
        <text>Transfers a segment of a (1-&gt;4)-alpha-D-glucan chain to a primary hydroxy group in a similar glucan chain.</text>
        <dbReference type="EC" id="2.4.1.18"/>
    </reaction>
</comment>
<comment type="pathway">
    <text evidence="1">Glycan biosynthesis; glycogen biosynthesis.</text>
</comment>
<comment type="subunit">
    <text evidence="1">Monomer.</text>
</comment>
<comment type="similarity">
    <text evidence="1">Belongs to the glycosyl hydrolase 13 family. GlgB subfamily.</text>
</comment>
<dbReference type="EC" id="2.4.1.18" evidence="1"/>
<dbReference type="EMBL" id="CP000233">
    <property type="protein sequence ID" value="ABE00101.1"/>
    <property type="molecule type" value="Genomic_DNA"/>
</dbReference>
<dbReference type="RefSeq" id="WP_011476259.1">
    <property type="nucleotide sequence ID" value="NC_007929.1"/>
</dbReference>
<dbReference type="RefSeq" id="YP_536184.1">
    <property type="nucleotide sequence ID" value="NC_007929.1"/>
</dbReference>
<dbReference type="SMR" id="Q1WSM8"/>
<dbReference type="STRING" id="362948.LSL_1294"/>
<dbReference type="CAZy" id="CBM48">
    <property type="family name" value="Carbohydrate-Binding Module Family 48"/>
</dbReference>
<dbReference type="CAZy" id="GH13">
    <property type="family name" value="Glycoside Hydrolase Family 13"/>
</dbReference>
<dbReference type="KEGG" id="lsl:LSL_1294"/>
<dbReference type="PATRIC" id="fig|362948.14.peg.1368"/>
<dbReference type="HOGENOM" id="CLU_004245_4_0_9"/>
<dbReference type="OrthoDB" id="9800174at2"/>
<dbReference type="UniPathway" id="UPA00164"/>
<dbReference type="Proteomes" id="UP000006559">
    <property type="component" value="Chromosome"/>
</dbReference>
<dbReference type="GO" id="GO:0005829">
    <property type="term" value="C:cytosol"/>
    <property type="evidence" value="ECO:0007669"/>
    <property type="project" value="TreeGrafter"/>
</dbReference>
<dbReference type="GO" id="GO:0003844">
    <property type="term" value="F:1,4-alpha-glucan branching enzyme activity"/>
    <property type="evidence" value="ECO:0007669"/>
    <property type="project" value="UniProtKB-UniRule"/>
</dbReference>
<dbReference type="GO" id="GO:0043169">
    <property type="term" value="F:cation binding"/>
    <property type="evidence" value="ECO:0007669"/>
    <property type="project" value="InterPro"/>
</dbReference>
<dbReference type="GO" id="GO:0004553">
    <property type="term" value="F:hydrolase activity, hydrolyzing O-glycosyl compounds"/>
    <property type="evidence" value="ECO:0007669"/>
    <property type="project" value="InterPro"/>
</dbReference>
<dbReference type="GO" id="GO:0005978">
    <property type="term" value="P:glycogen biosynthetic process"/>
    <property type="evidence" value="ECO:0007669"/>
    <property type="project" value="UniProtKB-UniRule"/>
</dbReference>
<dbReference type="CDD" id="cd11322">
    <property type="entry name" value="AmyAc_Glg_BE"/>
    <property type="match status" value="1"/>
</dbReference>
<dbReference type="CDD" id="cd02855">
    <property type="entry name" value="E_set_GBE_prok_N"/>
    <property type="match status" value="1"/>
</dbReference>
<dbReference type="Gene3D" id="3.20.20.80">
    <property type="entry name" value="Glycosidases"/>
    <property type="match status" value="1"/>
</dbReference>
<dbReference type="Gene3D" id="2.60.40.1180">
    <property type="entry name" value="Golgi alpha-mannosidase II"/>
    <property type="match status" value="1"/>
</dbReference>
<dbReference type="Gene3D" id="2.60.40.10">
    <property type="entry name" value="Immunoglobulins"/>
    <property type="match status" value="1"/>
</dbReference>
<dbReference type="HAMAP" id="MF_00685">
    <property type="entry name" value="GlgB"/>
    <property type="match status" value="1"/>
</dbReference>
<dbReference type="InterPro" id="IPR006048">
    <property type="entry name" value="A-amylase/branching_C"/>
</dbReference>
<dbReference type="InterPro" id="IPR037439">
    <property type="entry name" value="Branching_enzy"/>
</dbReference>
<dbReference type="InterPro" id="IPR006407">
    <property type="entry name" value="GlgB"/>
</dbReference>
<dbReference type="InterPro" id="IPR044143">
    <property type="entry name" value="GlgB_N_E_set_prok"/>
</dbReference>
<dbReference type="InterPro" id="IPR006047">
    <property type="entry name" value="Glyco_hydro_13_cat_dom"/>
</dbReference>
<dbReference type="InterPro" id="IPR004193">
    <property type="entry name" value="Glyco_hydro_13_N"/>
</dbReference>
<dbReference type="InterPro" id="IPR013780">
    <property type="entry name" value="Glyco_hydro_b"/>
</dbReference>
<dbReference type="InterPro" id="IPR017853">
    <property type="entry name" value="Glycoside_hydrolase_SF"/>
</dbReference>
<dbReference type="InterPro" id="IPR013783">
    <property type="entry name" value="Ig-like_fold"/>
</dbReference>
<dbReference type="InterPro" id="IPR014756">
    <property type="entry name" value="Ig_E-set"/>
</dbReference>
<dbReference type="NCBIfam" id="TIGR01515">
    <property type="entry name" value="branching_enzym"/>
    <property type="match status" value="1"/>
</dbReference>
<dbReference type="NCBIfam" id="NF003811">
    <property type="entry name" value="PRK05402.1"/>
    <property type="match status" value="1"/>
</dbReference>
<dbReference type="NCBIfam" id="NF008967">
    <property type="entry name" value="PRK12313.1"/>
    <property type="match status" value="1"/>
</dbReference>
<dbReference type="PANTHER" id="PTHR43651">
    <property type="entry name" value="1,4-ALPHA-GLUCAN-BRANCHING ENZYME"/>
    <property type="match status" value="1"/>
</dbReference>
<dbReference type="PANTHER" id="PTHR43651:SF3">
    <property type="entry name" value="1,4-ALPHA-GLUCAN-BRANCHING ENZYME"/>
    <property type="match status" value="1"/>
</dbReference>
<dbReference type="Pfam" id="PF00128">
    <property type="entry name" value="Alpha-amylase"/>
    <property type="match status" value="1"/>
</dbReference>
<dbReference type="Pfam" id="PF02806">
    <property type="entry name" value="Alpha-amylase_C"/>
    <property type="match status" value="1"/>
</dbReference>
<dbReference type="Pfam" id="PF02922">
    <property type="entry name" value="CBM_48"/>
    <property type="match status" value="1"/>
</dbReference>
<dbReference type="PIRSF" id="PIRSF000463">
    <property type="entry name" value="GlgB"/>
    <property type="match status" value="1"/>
</dbReference>
<dbReference type="SMART" id="SM00642">
    <property type="entry name" value="Aamy"/>
    <property type="match status" value="1"/>
</dbReference>
<dbReference type="SUPFAM" id="SSF51445">
    <property type="entry name" value="(Trans)glycosidases"/>
    <property type="match status" value="1"/>
</dbReference>
<dbReference type="SUPFAM" id="SSF81296">
    <property type="entry name" value="E set domains"/>
    <property type="match status" value="1"/>
</dbReference>
<dbReference type="SUPFAM" id="SSF51011">
    <property type="entry name" value="Glycosyl hydrolase domain"/>
    <property type="match status" value="1"/>
</dbReference>
<reference key="1">
    <citation type="journal article" date="2006" name="Proc. Natl. Acad. Sci. U.S.A.">
        <title>Multireplicon genome architecture of Lactobacillus salivarius.</title>
        <authorList>
            <person name="Claesson M.J."/>
            <person name="Li Y."/>
            <person name="Leahy S."/>
            <person name="Canchaya C."/>
            <person name="van Pijkeren J.P."/>
            <person name="Cerdeno-Tarraga A.M."/>
            <person name="Parkhill J."/>
            <person name="Flynn S."/>
            <person name="O'Sullivan G.C."/>
            <person name="Collins J.K."/>
            <person name="Higgins D."/>
            <person name="Shanahan F."/>
            <person name="Fitzgerald G.F."/>
            <person name="van Sinderen D."/>
            <person name="O'Toole P.W."/>
        </authorList>
    </citation>
    <scope>NUCLEOTIDE SEQUENCE [LARGE SCALE GENOMIC DNA]</scope>
    <source>
        <strain>UCC118</strain>
    </source>
</reference>
<keyword id="KW-0119">Carbohydrate metabolism</keyword>
<keyword id="KW-0320">Glycogen biosynthesis</keyword>
<keyword id="KW-0321">Glycogen metabolism</keyword>
<keyword id="KW-0328">Glycosyltransferase</keyword>
<keyword id="KW-1185">Reference proteome</keyword>
<keyword id="KW-0808">Transferase</keyword>
<organism>
    <name type="scientific">Ligilactobacillus salivarius (strain UCC118)</name>
    <name type="common">Lactobacillus salivarius</name>
    <dbReference type="NCBI Taxonomy" id="362948"/>
    <lineage>
        <taxon>Bacteria</taxon>
        <taxon>Bacillati</taxon>
        <taxon>Bacillota</taxon>
        <taxon>Bacilli</taxon>
        <taxon>Lactobacillales</taxon>
        <taxon>Lactobacillaceae</taxon>
        <taxon>Ligilactobacillus</taxon>
    </lineage>
</organism>
<protein>
    <recommendedName>
        <fullName evidence="1">1,4-alpha-glucan branching enzyme GlgB</fullName>
        <ecNumber evidence="1">2.4.1.18</ecNumber>
    </recommendedName>
    <alternativeName>
        <fullName evidence="1">1,4-alpha-D-glucan:1,4-alpha-D-glucan 6-glucosyl-transferase</fullName>
    </alternativeName>
    <alternativeName>
        <fullName evidence="1">Alpha-(1-&gt;4)-glucan branching enzyme</fullName>
    </alternativeName>
    <alternativeName>
        <fullName evidence="1">Glycogen branching enzyme</fullName>
        <shortName evidence="1">BE</shortName>
    </alternativeName>
</protein>
<proteinExistence type="inferred from homology"/>
<accession>Q1WSM8</accession>
<name>GLGB_LIGS1</name>
<sequence>MAVNTEERHGQESLENHKHMFNQGVNYELYNFLGVHKISRDDESGYVFRVWAPHAKQVWVCGDFNNWDKSHPMILDEKSGIWSIEVKESRENQYYKYLVKQANGREIMKTDPMAQVYEKRPETAAVVKELEPFKWNDGLWRGRQKRMNHFNNPINIYEVHAPSWKEHEDGSLYTFKDLTAELIPYVKKMGYTHIEFMPLMEHPLPASWGYQLTGYFALCSSYGTPDEFKDFVNECHQNNIGVLVDWVPGHFSINDDALAYYDGTPTYEYEDPDRAKNIGWGALNFDLGKPEVQSFLLSSAFYWLNEFHLDGMRVDAVSNMIYLDYDEGPWKPNKYGDTRNLEGYAFLQKFNKVVKFAHPESLIIAEESSSGTQISGTIESGAIGFDYKWNMGWMNDVLEFFEMDPYFRKDNLNLVTFSFMYWQAENFVLPLSHDEVVHGKKSLMHKMWGDRYRQFAQLRTLYTFMMMHPGKKLLFMSGEWGQFLEWKFDHGLEWVDLQDEMNAKMQHFTSVLNHFYKEERPLWELGQQDATLEVIDADNHNDTVLSFIRHGKRKKDFLIVILNFTPVERRNFRIGVPYEGTYTEILNTEMKEFGGTWVEHNADSVSEEVNFKDYEHSITTTVPALGAIILKPKDIKVTRRSSKKHSHKK</sequence>
<feature type="chain" id="PRO_0000260663" description="1,4-alpha-glucan branching enzyme GlgB">
    <location>
        <begin position="1"/>
        <end position="649"/>
    </location>
</feature>
<feature type="active site" description="Nucleophile" evidence="1">
    <location>
        <position position="315"/>
    </location>
</feature>
<feature type="active site" description="Proton donor" evidence="1">
    <location>
        <position position="366"/>
    </location>
</feature>